<gene>
    <name type="primary">CBFA2T3</name>
    <name type="ORF">RCJMB04_23o9</name>
</gene>
<keyword id="KW-0025">Alternative splicing</keyword>
<keyword id="KW-0175">Coiled coil</keyword>
<keyword id="KW-0221">Differentiation</keyword>
<keyword id="KW-0333">Golgi apparatus</keyword>
<keyword id="KW-0479">Metal-binding</keyword>
<keyword id="KW-0539">Nucleus</keyword>
<keyword id="KW-1185">Reference proteome</keyword>
<keyword id="KW-0678">Repressor</keyword>
<keyword id="KW-0804">Transcription</keyword>
<keyword id="KW-0805">Transcription regulation</keyword>
<keyword id="KW-0862">Zinc</keyword>
<keyword id="KW-0863">Zinc-finger</keyword>
<dbReference type="EMBL" id="AJ851739">
    <property type="protein sequence ID" value="CAH65373.1"/>
    <property type="molecule type" value="mRNA"/>
</dbReference>
<dbReference type="EMBL" id="AY714074">
    <property type="protein sequence ID" value="AAW49212.1"/>
    <property type="status" value="ALT_INIT"/>
    <property type="molecule type" value="mRNA"/>
</dbReference>
<dbReference type="EMBL" id="AY714075">
    <property type="protein sequence ID" value="AAW49213.1"/>
    <property type="status" value="ALT_INIT"/>
    <property type="molecule type" value="mRNA"/>
</dbReference>
<dbReference type="RefSeq" id="NP_001025751.1">
    <property type="nucleotide sequence ID" value="NM_001030580.1"/>
</dbReference>
<dbReference type="RefSeq" id="XP_046781562.1">
    <molecule id="Q5F3B1-2"/>
    <property type="nucleotide sequence ID" value="XM_046925606.1"/>
</dbReference>
<dbReference type="BMRB" id="Q5F3B1"/>
<dbReference type="SMR" id="Q5F3B1"/>
<dbReference type="FunCoup" id="Q5F3B1">
    <property type="interactions" value="20"/>
</dbReference>
<dbReference type="STRING" id="9031.ENSGALP00000055240"/>
<dbReference type="GlyGen" id="Q5F3B1">
    <property type="glycosylation" value="3 sites"/>
</dbReference>
<dbReference type="PaxDb" id="9031-ENSGALP00000038113"/>
<dbReference type="GeneID" id="415846"/>
<dbReference type="KEGG" id="gga:415846"/>
<dbReference type="CTD" id="863"/>
<dbReference type="VEuPathDB" id="HostDB:geneid_415846"/>
<dbReference type="eggNOG" id="ENOG502QTD6">
    <property type="taxonomic scope" value="Eukaryota"/>
</dbReference>
<dbReference type="InParanoid" id="Q5F3B1"/>
<dbReference type="OrthoDB" id="8872930at2759"/>
<dbReference type="PhylomeDB" id="Q5F3B1"/>
<dbReference type="PRO" id="PR:Q5F3B1"/>
<dbReference type="Proteomes" id="UP000000539">
    <property type="component" value="Unassembled WGS sequence"/>
</dbReference>
<dbReference type="GO" id="GO:0005794">
    <property type="term" value="C:Golgi apparatus"/>
    <property type="evidence" value="ECO:0007669"/>
    <property type="project" value="UniProtKB-SubCell"/>
</dbReference>
<dbReference type="GO" id="GO:0005730">
    <property type="term" value="C:nucleolus"/>
    <property type="evidence" value="ECO:0007669"/>
    <property type="project" value="UniProtKB-SubCell"/>
</dbReference>
<dbReference type="GO" id="GO:0005654">
    <property type="term" value="C:nucleoplasm"/>
    <property type="evidence" value="ECO:0007669"/>
    <property type="project" value="UniProtKB-SubCell"/>
</dbReference>
<dbReference type="GO" id="GO:0005634">
    <property type="term" value="C:nucleus"/>
    <property type="evidence" value="ECO:0000318"/>
    <property type="project" value="GO_Central"/>
</dbReference>
<dbReference type="GO" id="GO:0003714">
    <property type="term" value="F:transcription corepressor activity"/>
    <property type="evidence" value="ECO:0000318"/>
    <property type="project" value="GO_Central"/>
</dbReference>
<dbReference type="GO" id="GO:0008270">
    <property type="term" value="F:zinc ion binding"/>
    <property type="evidence" value="ECO:0007669"/>
    <property type="project" value="UniProtKB-KW"/>
</dbReference>
<dbReference type="GO" id="GO:0030154">
    <property type="term" value="P:cell differentiation"/>
    <property type="evidence" value="ECO:0007669"/>
    <property type="project" value="UniProtKB-KW"/>
</dbReference>
<dbReference type="GO" id="GO:0006351">
    <property type="term" value="P:DNA-templated transcription"/>
    <property type="evidence" value="ECO:0007669"/>
    <property type="project" value="InterPro"/>
</dbReference>
<dbReference type="GO" id="GO:0045892">
    <property type="term" value="P:negative regulation of DNA-templated transcription"/>
    <property type="evidence" value="ECO:0000318"/>
    <property type="project" value="GO_Central"/>
</dbReference>
<dbReference type="FunFam" id="6.10.140.2220:FF:000001">
    <property type="entry name" value="CBFA2/RUNX1 translocation partner 3"/>
    <property type="match status" value="1"/>
</dbReference>
<dbReference type="FunFam" id="1.20.120.1110:FF:000001">
    <property type="entry name" value="RUNX1 translocation partner 1"/>
    <property type="match status" value="1"/>
</dbReference>
<dbReference type="Gene3D" id="6.10.140.2220">
    <property type="match status" value="1"/>
</dbReference>
<dbReference type="Gene3D" id="6.10.250.230">
    <property type="match status" value="1"/>
</dbReference>
<dbReference type="Gene3D" id="1.20.120.1110">
    <property type="entry name" value="TAFH/NHR1 domain"/>
    <property type="match status" value="1"/>
</dbReference>
<dbReference type="InterPro" id="IPR013289">
    <property type="entry name" value="CBFA2T1/2/3"/>
</dbReference>
<dbReference type="InterPro" id="IPR013292">
    <property type="entry name" value="CBFA2T3"/>
</dbReference>
<dbReference type="InterPro" id="IPR014896">
    <property type="entry name" value="NHR2"/>
</dbReference>
<dbReference type="InterPro" id="IPR037249">
    <property type="entry name" value="TAFH/NHR1_dom_sf"/>
</dbReference>
<dbReference type="InterPro" id="IPR003894">
    <property type="entry name" value="TAFH_NHR1"/>
</dbReference>
<dbReference type="InterPro" id="IPR002893">
    <property type="entry name" value="Znf_MYND"/>
</dbReference>
<dbReference type="PANTHER" id="PTHR10379">
    <property type="entry name" value="MTG8 ETO EIGHT TWENTY ONE PROTEIN"/>
    <property type="match status" value="1"/>
</dbReference>
<dbReference type="PANTHER" id="PTHR10379:SF6">
    <property type="entry name" value="PROTEIN CBFA2T3"/>
    <property type="match status" value="1"/>
</dbReference>
<dbReference type="Pfam" id="PF08788">
    <property type="entry name" value="NHR2"/>
    <property type="match status" value="1"/>
</dbReference>
<dbReference type="Pfam" id="PF07531">
    <property type="entry name" value="TAFH"/>
    <property type="match status" value="1"/>
</dbReference>
<dbReference type="Pfam" id="PF01753">
    <property type="entry name" value="zf-MYND"/>
    <property type="match status" value="1"/>
</dbReference>
<dbReference type="PRINTS" id="PR01875">
    <property type="entry name" value="ETOFAMILY"/>
</dbReference>
<dbReference type="PRINTS" id="PR01878">
    <property type="entry name" value="MTG16PROTEIN"/>
</dbReference>
<dbReference type="SMART" id="SM00549">
    <property type="entry name" value="TAFH"/>
    <property type="match status" value="1"/>
</dbReference>
<dbReference type="SUPFAM" id="SSF144232">
    <property type="entry name" value="HIT/MYND zinc finger-like"/>
    <property type="match status" value="1"/>
</dbReference>
<dbReference type="SUPFAM" id="SSF158553">
    <property type="entry name" value="TAFH domain-like"/>
    <property type="match status" value="1"/>
</dbReference>
<dbReference type="PROSITE" id="PS51119">
    <property type="entry name" value="TAFH"/>
    <property type="match status" value="1"/>
</dbReference>
<dbReference type="PROSITE" id="PS01360">
    <property type="entry name" value="ZF_MYND_1"/>
    <property type="match status" value="1"/>
</dbReference>
<dbReference type="PROSITE" id="PS50865">
    <property type="entry name" value="ZF_MYND_2"/>
    <property type="match status" value="1"/>
</dbReference>
<evidence type="ECO:0000250" key="1"/>
<evidence type="ECO:0000255" key="2"/>
<evidence type="ECO:0000255" key="3">
    <source>
        <dbReference type="PROSITE-ProRule" id="PRU00134"/>
    </source>
</evidence>
<evidence type="ECO:0000255" key="4">
    <source>
        <dbReference type="PROSITE-ProRule" id="PRU00440"/>
    </source>
</evidence>
<evidence type="ECO:0000256" key="5">
    <source>
        <dbReference type="SAM" id="MobiDB-lite"/>
    </source>
</evidence>
<evidence type="ECO:0000269" key="6">
    <source>
    </source>
</evidence>
<evidence type="ECO:0000303" key="7">
    <source>
    </source>
</evidence>
<evidence type="ECO:0000305" key="8"/>
<feature type="chain" id="PRO_0000307175" description="Protein CBFA2T3">
    <location>
        <begin position="1"/>
        <end position="591"/>
    </location>
</feature>
<feature type="domain" description="TAFH" evidence="4">
    <location>
        <begin position="112"/>
        <end position="207"/>
    </location>
</feature>
<feature type="zinc finger region" description="MYND-type" evidence="3">
    <location>
        <begin position="501"/>
        <end position="537"/>
    </location>
</feature>
<feature type="region of interest" description="Mediates localization to the nucleus" evidence="1">
    <location>
        <begin position="1"/>
        <end position="381"/>
    </location>
</feature>
<feature type="region of interest" description="Disordered" evidence="5">
    <location>
        <begin position="1"/>
        <end position="105"/>
    </location>
</feature>
<feature type="region of interest" description="Disordered" evidence="5">
    <location>
        <begin position="226"/>
        <end position="291"/>
    </location>
</feature>
<feature type="region of interest" description="Disordered" evidence="5">
    <location>
        <begin position="386"/>
        <end position="420"/>
    </location>
</feature>
<feature type="region of interest" description="Disordered" evidence="5">
    <location>
        <begin position="548"/>
        <end position="591"/>
    </location>
</feature>
<feature type="coiled-coil region" evidence="2">
    <location>
        <begin position="433"/>
        <end position="488"/>
    </location>
</feature>
<feature type="compositionally biased region" description="Pro residues" evidence="5">
    <location>
        <begin position="41"/>
        <end position="52"/>
    </location>
</feature>
<feature type="compositionally biased region" description="Polar residues" evidence="5">
    <location>
        <begin position="55"/>
        <end position="105"/>
    </location>
</feature>
<feature type="compositionally biased region" description="Basic and acidic residues" evidence="5">
    <location>
        <begin position="230"/>
        <end position="256"/>
    </location>
</feature>
<feature type="compositionally biased region" description="Polar residues" evidence="5">
    <location>
        <begin position="263"/>
        <end position="274"/>
    </location>
</feature>
<feature type="compositionally biased region" description="Pro residues" evidence="5">
    <location>
        <begin position="279"/>
        <end position="290"/>
    </location>
</feature>
<feature type="compositionally biased region" description="Low complexity" evidence="5">
    <location>
        <begin position="394"/>
        <end position="410"/>
    </location>
</feature>
<feature type="compositionally biased region" description="Low complexity" evidence="5">
    <location>
        <begin position="560"/>
        <end position="585"/>
    </location>
</feature>
<feature type="binding site" evidence="3">
    <location>
        <position position="501"/>
    </location>
    <ligand>
        <name>Zn(2+)</name>
        <dbReference type="ChEBI" id="CHEBI:29105"/>
        <label>1</label>
    </ligand>
</feature>
<feature type="binding site" evidence="3">
    <location>
        <position position="504"/>
    </location>
    <ligand>
        <name>Zn(2+)</name>
        <dbReference type="ChEBI" id="CHEBI:29105"/>
        <label>1</label>
    </ligand>
</feature>
<feature type="binding site" evidence="3">
    <location>
        <position position="512"/>
    </location>
    <ligand>
        <name>Zn(2+)</name>
        <dbReference type="ChEBI" id="CHEBI:29105"/>
        <label>2</label>
    </ligand>
</feature>
<feature type="binding site" evidence="3">
    <location>
        <position position="515"/>
    </location>
    <ligand>
        <name>Zn(2+)</name>
        <dbReference type="ChEBI" id="CHEBI:29105"/>
        <label>2</label>
    </ligand>
</feature>
<feature type="binding site" evidence="3">
    <location>
        <position position="521"/>
    </location>
    <ligand>
        <name>Zn(2+)</name>
        <dbReference type="ChEBI" id="CHEBI:29105"/>
        <label>1</label>
    </ligand>
</feature>
<feature type="binding site" evidence="3">
    <location>
        <position position="525"/>
    </location>
    <ligand>
        <name>Zn(2+)</name>
        <dbReference type="ChEBI" id="CHEBI:29105"/>
        <label>1</label>
    </ligand>
</feature>
<feature type="binding site" evidence="3">
    <location>
        <position position="533"/>
    </location>
    <ligand>
        <name>Zn(2+)</name>
        <dbReference type="ChEBI" id="CHEBI:29105"/>
        <label>2</label>
    </ligand>
</feature>
<feature type="binding site" evidence="3">
    <location>
        <position position="537"/>
    </location>
    <ligand>
        <name>Zn(2+)</name>
        <dbReference type="ChEBI" id="CHEBI:29105"/>
        <label>2</label>
    </ligand>
</feature>
<feature type="splice variant" id="VSP_028628" description="In isoform 2." evidence="7">
    <original>M</original>
    <variation>NRDAVPPTFLPRGRFHGCLKWSMVCLL</variation>
    <location>
        <position position="68"/>
    </location>
</feature>
<proteinExistence type="evidence at transcript level"/>
<accession>Q5F3B1</accession>
<accession>Q5IJ74</accession>
<accession>Q5IJ75</accession>
<sequence>MPGGTPRLEGHPFSKTGPDPATPGAATMPDSPADVKTQPRSTPPNMPPPPPAVTQGATRHPSFTPSTMMNGSSHSPTAINGAPSTPNGFSNGPATSSSASLSTHQLPPACGARQLSKLKRFLTTLQQFGNDISPEIGERVRTLVLGLVNSTLTIEEFHAKLQEATNFPLRPFVIPFLKANLPLLQRELLHCARMAKQSPAQYLAQHEQLLLDANASSPIDSSELLLEVSESGKRRTPDRTKENGLDRDPLHPEHLSKRPCTMSPAQRYSPSNGLSHPPNGLPHPPGPPPQHYRLEDMAMAHHYRDAYRHADPRERPRPAVHGARQEEVIDHRLTDREWAEEWKHLNNLLNCIMDMVEKTRRSLTVLRRCQEADREELNHWIRRYSDAEDMKKGSPPSARPHNSSSSSEAPQLDVHRDFAPRPLSGYMPEEIWRKAEEAVNEVKRQAMSELQKAVSDAERKAHELITTERAKMERALAEAKRQASEDALTVINQQEDSSESCWNCGRKASETCSGCNTARYCGSFCQHKDWEKHHHVCGQTLQGLPAPSVPTAVGQPEAVPPMASSPSDAGSAGASRAGTPGTPAPLESASR</sequence>
<reference key="1">
    <citation type="journal article" date="2005" name="Genome Biol.">
        <title>Full-length cDNAs from chicken bursal lymphocytes to facilitate gene function analysis.</title>
        <authorList>
            <person name="Caldwell R.B."/>
            <person name="Kierzek A.M."/>
            <person name="Arakawa H."/>
            <person name="Bezzubov Y."/>
            <person name="Zaim J."/>
            <person name="Fiedler P."/>
            <person name="Kutter S."/>
            <person name="Blagodatski A."/>
            <person name="Kostovska D."/>
            <person name="Koter M."/>
            <person name="Plachy J."/>
            <person name="Carninci P."/>
            <person name="Hayashizaki Y."/>
            <person name="Buerstedde J.-M."/>
        </authorList>
    </citation>
    <scope>NUCLEOTIDE SEQUENCE [LARGE SCALE MRNA] (ISOFORM 1)</scope>
    <source>
        <strain>CB</strain>
        <tissue>Bursa of Fabricius</tissue>
    </source>
</reference>
<reference key="2">
    <citation type="journal article" date="2005" name="Dev. Biol.">
        <title>The expression and function of MTG/ETO family proteins during neurogenesis.</title>
        <authorList>
            <person name="Koyano-Nakagawa N."/>
            <person name="Kintner C."/>
        </authorList>
    </citation>
    <scope>NUCLEOTIDE SEQUENCE [MRNA] OF 19-591 (ISOFORMS 1 AND 2)</scope>
    <scope>DEVELOPMENTAL STAGE</scope>
</reference>
<protein>
    <recommendedName>
        <fullName>Protein CBFA2T3</fullName>
    </recommendedName>
</protein>
<organism>
    <name type="scientific">Gallus gallus</name>
    <name type="common">Chicken</name>
    <dbReference type="NCBI Taxonomy" id="9031"/>
    <lineage>
        <taxon>Eukaryota</taxon>
        <taxon>Metazoa</taxon>
        <taxon>Chordata</taxon>
        <taxon>Craniata</taxon>
        <taxon>Vertebrata</taxon>
        <taxon>Euteleostomi</taxon>
        <taxon>Archelosauria</taxon>
        <taxon>Archosauria</taxon>
        <taxon>Dinosauria</taxon>
        <taxon>Saurischia</taxon>
        <taxon>Theropoda</taxon>
        <taxon>Coelurosauria</taxon>
        <taxon>Aves</taxon>
        <taxon>Neognathae</taxon>
        <taxon>Galloanserae</taxon>
        <taxon>Galliformes</taxon>
        <taxon>Phasianidae</taxon>
        <taxon>Phasianinae</taxon>
        <taxon>Gallus</taxon>
    </lineage>
</organism>
<name>MTG16_CHICK</name>
<comment type="function">
    <text evidence="1">Functions as a transcriptional repressor. Regulates the proliferation and the differentiation of erythroid progenitors. Plays a role in granulocyte differentiation. May also function as an A-kinase-anchoring protein (By similarity).</text>
</comment>
<comment type="subcellular location">
    <subcellularLocation>
        <location>Nucleus</location>
        <location>Nucleolus</location>
    </subcellularLocation>
    <subcellularLocation>
        <location evidence="1">Nucleus</location>
        <location evidence="1">Nucleoplasm</location>
    </subcellularLocation>
    <subcellularLocation>
        <location evidence="1">Golgi apparatus</location>
    </subcellularLocation>
</comment>
<comment type="alternative products">
    <event type="alternative splicing"/>
    <isoform>
        <id>Q5F3B1-1</id>
        <name>1</name>
        <sequence type="displayed"/>
    </isoform>
    <isoform>
        <id>Q5F3B1-2</id>
        <name>2</name>
        <sequence type="described" ref="VSP_028628"/>
    </isoform>
</comment>
<comment type="developmental stage">
    <text evidence="6">Expressed in the spinal cord of stage 22 embryos. Expressed during neurogenesis in the mantle zone of the spinal cord in domains corresponding to interneurons.</text>
</comment>
<comment type="similarity">
    <text evidence="8">Belongs to the CBFA2T family.</text>
</comment>
<comment type="sequence caution" evidence="8">
    <conflict type="erroneous initiation">
        <sequence resource="EMBL-CDS" id="AAW49212"/>
    </conflict>
</comment>
<comment type="sequence caution" evidence="8">
    <conflict type="erroneous initiation">
        <sequence resource="EMBL-CDS" id="AAW49213"/>
    </conflict>
</comment>